<comment type="catalytic activity">
    <reaction>
        <text>1-aminocyclopropane-1-carboxylate + L-ascorbate + O2 = ethene + L-dehydroascorbate + hydrogen cyanide + CO2 + 2 H2O</text>
        <dbReference type="Rhea" id="RHEA:23640"/>
        <dbReference type="ChEBI" id="CHEBI:15377"/>
        <dbReference type="ChEBI" id="CHEBI:15379"/>
        <dbReference type="ChEBI" id="CHEBI:16526"/>
        <dbReference type="ChEBI" id="CHEBI:18153"/>
        <dbReference type="ChEBI" id="CHEBI:18407"/>
        <dbReference type="ChEBI" id="CHEBI:38290"/>
        <dbReference type="ChEBI" id="CHEBI:58360"/>
        <dbReference type="ChEBI" id="CHEBI:58539"/>
        <dbReference type="EC" id="1.14.17.4"/>
    </reaction>
</comment>
<comment type="cofactor">
    <cofactor>
        <name>Fe cation</name>
        <dbReference type="ChEBI" id="CHEBI:24875"/>
    </cofactor>
</comment>
<comment type="pathway">
    <text>Alkene biosynthesis; ethylene biosynthesis via S-adenosyl-L-methionine; ethylene from S-adenosyl-L-methionine: step 2/2.</text>
</comment>
<comment type="similarity">
    <text evidence="2">Belongs to the iron/ascorbate-dependent oxidoreductase family.</text>
</comment>
<protein>
    <recommendedName>
        <fullName>1-aminocyclopropane-1-carboxylate oxidase 1</fullName>
        <shortName>ACC oxidase 1</shortName>
        <ecNumber>1.14.17.4</ecNumber>
    </recommendedName>
    <alternativeName>
        <fullName>Ethylene-forming enzyme</fullName>
        <shortName>EFE</shortName>
    </alternativeName>
</protein>
<dbReference type="EC" id="1.14.17.4"/>
<dbReference type="EMBL" id="AP005393">
    <property type="protein sequence ID" value="BAD38007.1"/>
    <property type="molecule type" value="Genomic_DNA"/>
</dbReference>
<dbReference type="EMBL" id="AP005559">
    <property type="protein sequence ID" value="BAD38213.1"/>
    <property type="molecule type" value="Genomic_DNA"/>
</dbReference>
<dbReference type="EMBL" id="AP008215">
    <property type="protein sequence ID" value="BAF25244.1"/>
    <property type="molecule type" value="Genomic_DNA"/>
</dbReference>
<dbReference type="EMBL" id="AP014965">
    <property type="protein sequence ID" value="BAT08385.1"/>
    <property type="molecule type" value="Genomic_DNA"/>
</dbReference>
<dbReference type="EMBL" id="AK058296">
    <property type="protein sequence ID" value="BAG86653.1"/>
    <property type="molecule type" value="mRNA"/>
</dbReference>
<dbReference type="RefSeq" id="XP_015611803.1">
    <property type="nucleotide sequence ID" value="XM_015756317.1"/>
</dbReference>
<dbReference type="SMR" id="Q0J1C1"/>
<dbReference type="FunCoup" id="Q0J1C1">
    <property type="interactions" value="98"/>
</dbReference>
<dbReference type="STRING" id="39947.Q0J1C1"/>
<dbReference type="PaxDb" id="39947-Q0J1C1"/>
<dbReference type="EnsemblPlants" id="Os09t0451400-01">
    <property type="protein sequence ID" value="Os09t0451400-01"/>
    <property type="gene ID" value="Os09g0451400"/>
</dbReference>
<dbReference type="Gramene" id="Os09t0451400-01">
    <property type="protein sequence ID" value="Os09t0451400-01"/>
    <property type="gene ID" value="Os09g0451400"/>
</dbReference>
<dbReference type="KEGG" id="dosa:Os09g0451400"/>
<dbReference type="eggNOG" id="KOG0143">
    <property type="taxonomic scope" value="Eukaryota"/>
</dbReference>
<dbReference type="HOGENOM" id="CLU_010119_16_1_1"/>
<dbReference type="InParanoid" id="Q0J1C1"/>
<dbReference type="OMA" id="IDKVYPK"/>
<dbReference type="OrthoDB" id="288590at2759"/>
<dbReference type="PlantReactome" id="R-OSA-1119334">
    <property type="pathway name" value="Ethylene biosynthesis from methionine"/>
</dbReference>
<dbReference type="UniPathway" id="UPA00384">
    <property type="reaction ID" value="UER00563"/>
</dbReference>
<dbReference type="Proteomes" id="UP000000763">
    <property type="component" value="Chromosome 9"/>
</dbReference>
<dbReference type="Proteomes" id="UP000059680">
    <property type="component" value="Chromosome 9"/>
</dbReference>
<dbReference type="GO" id="GO:0009815">
    <property type="term" value="F:1-aminocyclopropane-1-carboxylate oxidase activity"/>
    <property type="evidence" value="ECO:0007669"/>
    <property type="project" value="UniProtKB-EC"/>
</dbReference>
<dbReference type="GO" id="GO:0016706">
    <property type="term" value="F:2-oxoglutarate-dependent dioxygenase activity"/>
    <property type="evidence" value="ECO:0000318"/>
    <property type="project" value="GO_Central"/>
</dbReference>
<dbReference type="GO" id="GO:0031418">
    <property type="term" value="F:L-ascorbic acid binding"/>
    <property type="evidence" value="ECO:0007669"/>
    <property type="project" value="UniProtKB-KW"/>
</dbReference>
<dbReference type="GO" id="GO:0046872">
    <property type="term" value="F:metal ion binding"/>
    <property type="evidence" value="ECO:0007669"/>
    <property type="project" value="UniProtKB-KW"/>
</dbReference>
<dbReference type="GO" id="GO:0009693">
    <property type="term" value="P:ethylene biosynthetic process"/>
    <property type="evidence" value="ECO:0007669"/>
    <property type="project" value="UniProtKB-UniPathway"/>
</dbReference>
<dbReference type="GO" id="GO:0009835">
    <property type="term" value="P:fruit ripening"/>
    <property type="evidence" value="ECO:0007669"/>
    <property type="project" value="UniProtKB-KW"/>
</dbReference>
<dbReference type="FunFam" id="2.60.120.330:FF:000002">
    <property type="entry name" value="1-aminocyclopropane-1-carboxylate oxidase 1"/>
    <property type="match status" value="1"/>
</dbReference>
<dbReference type="Gene3D" id="2.60.120.330">
    <property type="entry name" value="B-lactam Antibiotic, Isopenicillin N Synthase, Chain"/>
    <property type="match status" value="1"/>
</dbReference>
<dbReference type="InterPro" id="IPR026992">
    <property type="entry name" value="DIOX_N"/>
</dbReference>
<dbReference type="InterPro" id="IPR044861">
    <property type="entry name" value="IPNS-like_FE2OG_OXY"/>
</dbReference>
<dbReference type="InterPro" id="IPR027443">
    <property type="entry name" value="IPNS-like_sf"/>
</dbReference>
<dbReference type="InterPro" id="IPR005123">
    <property type="entry name" value="Oxoglu/Fe-dep_dioxygenase_dom"/>
</dbReference>
<dbReference type="InterPro" id="IPR050295">
    <property type="entry name" value="Plant_2OG-oxidoreductases"/>
</dbReference>
<dbReference type="PANTHER" id="PTHR47991">
    <property type="entry name" value="OXOGLUTARATE/IRON-DEPENDENT DIOXYGENASE"/>
    <property type="match status" value="1"/>
</dbReference>
<dbReference type="Pfam" id="PF03171">
    <property type="entry name" value="2OG-FeII_Oxy"/>
    <property type="match status" value="1"/>
</dbReference>
<dbReference type="Pfam" id="PF14226">
    <property type="entry name" value="DIOX_N"/>
    <property type="match status" value="1"/>
</dbReference>
<dbReference type="SUPFAM" id="SSF51197">
    <property type="entry name" value="Clavaminate synthase-like"/>
    <property type="match status" value="1"/>
</dbReference>
<dbReference type="PROSITE" id="PS51471">
    <property type="entry name" value="FE2OG_OXY"/>
    <property type="match status" value="1"/>
</dbReference>
<keyword id="KW-0266">Ethylene biosynthesis</keyword>
<keyword id="KW-0292">Fruit ripening</keyword>
<keyword id="KW-0408">Iron</keyword>
<keyword id="KW-0479">Metal-binding</keyword>
<keyword id="KW-0560">Oxidoreductase</keyword>
<keyword id="KW-1185">Reference proteome</keyword>
<keyword id="KW-0847">Vitamin C</keyword>
<sequence length="322" mass="36440">MAPTSTFPVINMELLAGEERPAAMEQLDDACENWGFFEILNHGISTELMDEVEKMTKDHYKRVREQRFLEFASKTLKEGCDDVNKAEKLDWESTFFVRHLPESNIADIPDLDDDYRRLMKRFAAELETLAERLLDLLCENLGLEKGYLTKAFRGPAGAPTFGTKVSSYPPCPRPDLVEGLRAHTDAGGIILLFQDDRVGGLQLLKDGEWVDVPPMRHSIVVNLGDQLEVITNGRYKSVIHRVVAQTDGNRMSIASFYNPGSDAVISPAPALVKEEEAVVAYPKFVFEDYMKLYVRHKFEAKEPRFEAFKSMETETSNRIAIA</sequence>
<evidence type="ECO:0000255" key="1">
    <source>
        <dbReference type="PROSITE-ProRule" id="PRU00805"/>
    </source>
</evidence>
<evidence type="ECO:0000305" key="2"/>
<proteinExistence type="evidence at transcript level"/>
<organism>
    <name type="scientific">Oryza sativa subsp. japonica</name>
    <name type="common">Rice</name>
    <dbReference type="NCBI Taxonomy" id="39947"/>
    <lineage>
        <taxon>Eukaryota</taxon>
        <taxon>Viridiplantae</taxon>
        <taxon>Streptophyta</taxon>
        <taxon>Embryophyta</taxon>
        <taxon>Tracheophyta</taxon>
        <taxon>Spermatophyta</taxon>
        <taxon>Magnoliopsida</taxon>
        <taxon>Liliopsida</taxon>
        <taxon>Poales</taxon>
        <taxon>Poaceae</taxon>
        <taxon>BOP clade</taxon>
        <taxon>Oryzoideae</taxon>
        <taxon>Oryzeae</taxon>
        <taxon>Oryzinae</taxon>
        <taxon>Oryza</taxon>
        <taxon>Oryza sativa</taxon>
    </lineage>
</organism>
<reference key="1">
    <citation type="journal article" date="2005" name="Nature">
        <title>The map-based sequence of the rice genome.</title>
        <authorList>
            <consortium name="International rice genome sequencing project (IRGSP)"/>
        </authorList>
    </citation>
    <scope>NUCLEOTIDE SEQUENCE [LARGE SCALE GENOMIC DNA]</scope>
    <source>
        <strain>cv. Nipponbare</strain>
    </source>
</reference>
<reference key="2">
    <citation type="journal article" date="2008" name="Nucleic Acids Res.">
        <title>The rice annotation project database (RAP-DB): 2008 update.</title>
        <authorList>
            <consortium name="The rice annotation project (RAP)"/>
        </authorList>
    </citation>
    <scope>GENOME REANNOTATION</scope>
    <source>
        <strain>cv. Nipponbare</strain>
    </source>
</reference>
<reference key="3">
    <citation type="journal article" date="2013" name="Rice">
        <title>Improvement of the Oryza sativa Nipponbare reference genome using next generation sequence and optical map data.</title>
        <authorList>
            <person name="Kawahara Y."/>
            <person name="de la Bastide M."/>
            <person name="Hamilton J.P."/>
            <person name="Kanamori H."/>
            <person name="McCombie W.R."/>
            <person name="Ouyang S."/>
            <person name="Schwartz D.C."/>
            <person name="Tanaka T."/>
            <person name="Wu J."/>
            <person name="Zhou S."/>
            <person name="Childs K.L."/>
            <person name="Davidson R.M."/>
            <person name="Lin H."/>
            <person name="Quesada-Ocampo L."/>
            <person name="Vaillancourt B."/>
            <person name="Sakai H."/>
            <person name="Lee S.S."/>
            <person name="Kim J."/>
            <person name="Numa H."/>
            <person name="Itoh T."/>
            <person name="Buell C.R."/>
            <person name="Matsumoto T."/>
        </authorList>
    </citation>
    <scope>GENOME REANNOTATION</scope>
    <source>
        <strain>cv. Nipponbare</strain>
    </source>
</reference>
<reference key="4">
    <citation type="journal article" date="2003" name="Science">
        <title>Collection, mapping, and annotation of over 28,000 cDNA clones from japonica rice.</title>
        <authorList>
            <consortium name="The rice full-length cDNA consortium"/>
        </authorList>
    </citation>
    <scope>NUCLEOTIDE SEQUENCE [LARGE SCALE MRNA]</scope>
    <source>
        <strain>cv. Nipponbare</strain>
    </source>
</reference>
<accession>Q0J1C1</accession>
<accession>B7E2Q6</accession>
<accession>Q40634</accession>
<accession>Q67UF6</accession>
<name>ACCO1_ORYSJ</name>
<feature type="chain" id="PRO_0000067268" description="1-aminocyclopropane-1-carboxylate oxidase 1">
    <location>
        <begin position="1"/>
        <end position="322"/>
    </location>
</feature>
<feature type="domain" description="Fe2OG dioxygenase" evidence="1">
    <location>
        <begin position="159"/>
        <end position="259"/>
    </location>
</feature>
<feature type="binding site" evidence="1">
    <location>
        <position position="183"/>
    </location>
    <ligand>
        <name>Fe cation</name>
        <dbReference type="ChEBI" id="CHEBI:24875"/>
    </ligand>
</feature>
<feature type="binding site" evidence="1">
    <location>
        <position position="185"/>
    </location>
    <ligand>
        <name>Fe cation</name>
        <dbReference type="ChEBI" id="CHEBI:24875"/>
    </ligand>
</feature>
<feature type="binding site" evidence="1">
    <location>
        <position position="240"/>
    </location>
    <ligand>
        <name>Fe cation</name>
        <dbReference type="ChEBI" id="CHEBI:24875"/>
    </ligand>
</feature>
<gene>
    <name type="primary">ACO1</name>
    <name type="ordered locus">Os09g0451400</name>
    <name type="ordered locus">LOC_Os09g27820</name>
    <name type="ORF">OJ1163_C07.24</name>
    <name type="ORF">P0488D02.1</name>
</gene>